<organism>
    <name type="scientific">Rattus norvegicus</name>
    <name type="common">Rat</name>
    <dbReference type="NCBI Taxonomy" id="10116"/>
    <lineage>
        <taxon>Eukaryota</taxon>
        <taxon>Metazoa</taxon>
        <taxon>Chordata</taxon>
        <taxon>Craniata</taxon>
        <taxon>Vertebrata</taxon>
        <taxon>Euteleostomi</taxon>
        <taxon>Mammalia</taxon>
        <taxon>Eutheria</taxon>
        <taxon>Euarchontoglires</taxon>
        <taxon>Glires</taxon>
        <taxon>Rodentia</taxon>
        <taxon>Myomorpha</taxon>
        <taxon>Muroidea</taxon>
        <taxon>Muridae</taxon>
        <taxon>Murinae</taxon>
        <taxon>Rattus</taxon>
    </lineage>
</organism>
<reference key="1">
    <citation type="journal article" date="1996" name="J. Biol. Chem.">
        <title>Structures, alternative splicing, and neurexin binding of multiple neuroligins.</title>
        <authorList>
            <person name="Ichtchenko K."/>
            <person name="Nguyen T."/>
            <person name="Suedhof T.C."/>
        </authorList>
    </citation>
    <scope>NUCLEOTIDE SEQUENCE [MRNA] (ISOFORMS 1 AND 2)</scope>
    <scope>PROTEIN SEQUENCE OF N-TERMINUS</scope>
    <scope>TISSUE SPECIFICITY</scope>
    <scope>INTERACTION WITH NEUREXIN 1-BETA; NEUREXIN 2-BETA AND NEUREXIN 3-BETA</scope>
    <source>
        <tissue>Forebrain</tissue>
    </source>
</reference>
<reference key="2">
    <citation type="journal article" date="1998" name="Mol. Cell. Neurosci.">
        <title>CIPP, a novel multivalent PDZ domain protein, selectively interacts with Kir4.0 family members, NMDA receptor subunits, neurexins, and neuroligins.</title>
        <authorList>
            <person name="Kurschner C."/>
            <person name="Mermelstein P.G."/>
            <person name="Holden W.T."/>
            <person name="Surmeier D.J."/>
        </authorList>
    </citation>
    <scope>INTERACTION WITH PATJ</scope>
</reference>
<reference key="3">
    <citation type="journal article" date="2001" name="Glia">
        <title>Neuroligin 3 is a vertebrate gliotactin expressed in the olfactory ensheathing glia, a growth-promoting class of macroglia.</title>
        <authorList>
            <person name="Gilbert M."/>
            <person name="Smith J."/>
            <person name="Roskams A.J."/>
            <person name="Auld V.J."/>
        </authorList>
    </citation>
    <scope>TISSUE SPECIFICITY</scope>
</reference>
<reference key="4">
    <citation type="journal article" date="2004" name="Cell">
        <title>Neurexins induce differentiation of GABA and glutamate postsynaptic specializations via neuroligins.</title>
        <authorList>
            <person name="Graf E.R."/>
            <person name="Zhang X."/>
            <person name="Jin S.X."/>
            <person name="Linhoff M.W."/>
            <person name="Craig A.M."/>
        </authorList>
    </citation>
    <scope>SUBCELLULAR LOCATION</scope>
    <scope>TISSUE SPECIFICITY</scope>
</reference>
<reference key="5">
    <citation type="journal article" date="2008" name="Endocrinology">
        <title>Expression of neurexin, neuroligin, and their cytoplasmic binding partners in the pancreatic beta-cells and the involvement of neuroligin in insulin secretion.</title>
        <authorList>
            <person name="Suckow A.T."/>
            <person name="Comoletti D."/>
            <person name="Waldrop M.A."/>
            <person name="Mosedale M."/>
            <person name="Egodage S."/>
            <person name="Taylor P."/>
            <person name="Chessler S.D."/>
        </authorList>
    </citation>
    <scope>TISSUE SPECIFICITY</scope>
    <scope>ALTERNATIVE SPLICING</scope>
</reference>
<reference key="6">
    <citation type="journal article" date="2008" name="Proc. Natl. Acad. Sci. U.S.A.">
        <title>Unusually rapid evolution of neuroligin-4 in mice.</title>
        <authorList>
            <person name="Bolliger M.F."/>
            <person name="Pei J."/>
            <person name="Maxeiner S."/>
            <person name="Boucard A.A."/>
            <person name="Grishin N.V."/>
            <person name="Sudhof T.C."/>
        </authorList>
    </citation>
    <scope>SUBCELLULAR LOCATION</scope>
</reference>
<reference key="7">
    <citation type="journal article" date="2008" name="Structure">
        <title>Crystal structures of beta-neurexin 1 and beta-neurexin 2 ectodomains and dynamics of splice insertion sequence 4.</title>
        <authorList>
            <person name="Koehnke J."/>
            <person name="Jin X."/>
            <person name="Trbovic N."/>
            <person name="Katsamba P.S."/>
            <person name="Brasch J."/>
            <person name="Ahlsen G."/>
            <person name="Scheiffele P."/>
            <person name="Honig B."/>
            <person name="Palmer A.G. III"/>
            <person name="Shapiro L."/>
        </authorList>
    </citation>
    <scope>INTERACTION WITH NRXN1</scope>
</reference>
<reference key="8">
    <citation type="journal article" date="2009" name="Neuron">
        <title>Neuroligin 2 drives postsynaptic assembly at perisomatic inhibitory synapses through gephyrin and collybistin.</title>
        <authorList>
            <person name="Poulopoulos A."/>
            <person name="Aramuni G."/>
            <person name="Meyer G."/>
            <person name="Soykan T."/>
            <person name="Hoon M."/>
            <person name="Papadopoulos T."/>
            <person name="Zhang M."/>
            <person name="Paarmann I."/>
            <person name="Fuchs C."/>
            <person name="Harvey K."/>
            <person name="Jedlicka P."/>
            <person name="Schwarzacher S.W."/>
            <person name="Betz H."/>
            <person name="Harvey R.J."/>
            <person name="Brose N."/>
            <person name="Zhang W."/>
            <person name="Varoqueaux F."/>
        </authorList>
    </citation>
    <scope>FUNCTION</scope>
    <scope>INTERACTION WITH GPHN</scope>
    <scope>SUBCELLULAR LOCATION</scope>
    <scope>TISSUE SPECIFICITY</scope>
    <scope>MUTAGENESIS OF TYR-770</scope>
</reference>
<reference key="9">
    <citation type="journal article" date="2010" name="J. Neurosci. Res.">
        <title>Synaptic localization of neuroligin 2 in the rodent retina: comparative study with the dystroglycan-containing complex.</title>
        <authorList>
            <person name="Lui L."/>
            <person name="Levinson J.N."/>
            <person name="Noel G."/>
            <person name="Handrigan G.R."/>
            <person name="Richman J.M."/>
            <person name="El-Husseini A."/>
            <person name="Moukhles H."/>
        </authorList>
    </citation>
    <scope>SUBCELLULAR LOCATION</scope>
    <scope>TISSUE SPECIFICITY</scope>
</reference>
<reference key="10">
    <citation type="journal article" date="2010" name="Neuron">
        <title>Splice form dependence of beta-neurexin/neuroligin binding interactions.</title>
        <authorList>
            <person name="Koehnke J."/>
            <person name="Katsamba P.S."/>
            <person name="Ahlsen G."/>
            <person name="Bahna F."/>
            <person name="Vendome J."/>
            <person name="Honig B."/>
            <person name="Shapiro L."/>
            <person name="Jin X."/>
        </authorList>
    </citation>
    <scope>INTERACTION WITH NRXN1</scope>
</reference>
<reference key="11">
    <citation type="journal article" date="2010" name="Neuroscience">
        <title>Postsynaptic scaffolding molecules modulate the localization of neuroligins.</title>
        <authorList>
            <person name="Levinson J.N."/>
            <person name="Li R."/>
            <person name="Kang R."/>
            <person name="Moukhles H."/>
            <person name="El-Husseini A."/>
            <person name="Bamji S.X."/>
        </authorList>
    </citation>
    <scope>SUBCELLULAR LOCATION</scope>
    <scope>TISSUE SPECIFICITY</scope>
</reference>
<reference key="12">
    <citation type="journal article" date="2012" name="J. Biol. Chem.">
        <title>Transcellular neuroligin-2 interactions enhance insulin secretion and are integral to pancreatic beta-cell function.</title>
        <authorList>
            <person name="Suckow A.T."/>
            <person name="Zhang C."/>
            <person name="Egodage S."/>
            <person name="Comoletti D."/>
            <person name="Taylor P."/>
            <person name="Miller M.T."/>
            <person name="Sweet I.R."/>
            <person name="Chessler S.D."/>
        </authorList>
    </citation>
    <scope>FUNCTION</scope>
    <scope>SUBCELLULAR LOCATION</scope>
</reference>
<reference key="13">
    <citation type="journal article" date="2012" name="Nat. Commun.">
        <title>Quantitative maps of protein phosphorylation sites across 14 different rat organs and tissues.</title>
        <authorList>
            <person name="Lundby A."/>
            <person name="Secher A."/>
            <person name="Lage K."/>
            <person name="Nordsborg N.B."/>
            <person name="Dmytriyev A."/>
            <person name="Lundby C."/>
            <person name="Olsen J.V."/>
        </authorList>
    </citation>
    <scope>PHOSPHORYLATION [LARGE SCALE ANALYSIS] AT SER-714</scope>
    <scope>IDENTIFICATION BY MASS SPECTROMETRY [LARGE SCALE ANALYSIS]</scope>
</reference>
<reference evidence="22" key="14">
    <citation type="journal article" date="2013" name="J. Cell Biol.">
        <title>The adhesion protein IgSF9b is coupled to neuroligin 2 via S-SCAM to promote inhibitory synapse development.</title>
        <authorList>
            <person name="Woo J."/>
            <person name="Kwon S.K."/>
            <person name="Nam J."/>
            <person name="Choi S."/>
            <person name="Takahashi H."/>
            <person name="Krueger D."/>
            <person name="Park J."/>
            <person name="Lee Y."/>
            <person name="Bae J.Y."/>
            <person name="Lee D."/>
            <person name="Ko J."/>
            <person name="Kim H."/>
            <person name="Kim M.H."/>
            <person name="Bae Y.C."/>
            <person name="Chang S."/>
            <person name="Craig A.M."/>
            <person name="Kim E."/>
        </authorList>
    </citation>
    <scope>IDENTIFICATION IN A COMPLEX WITH MAGI2 AND IGSF9B</scope>
</reference>
<reference key="15">
    <citation type="journal article" date="2013" name="Proc. Natl. Acad. Sci. U.S.A.">
        <title>MDGAs interact selectively with neuroligin-2 but not other neuroligins to regulate inhibitory synapse development.</title>
        <authorList>
            <person name="Lee K."/>
            <person name="Kim Y."/>
            <person name="Lee S.-J."/>
            <person name="Qiang Y."/>
            <person name="Lee D."/>
            <person name="Lee H.W."/>
            <person name="Kim H."/>
            <person name="Je H.S."/>
            <person name="Suedhof T.C."/>
            <person name="Ko J."/>
        </authorList>
    </citation>
    <scope>INTERACTION WITH MDGA1 AND MDGA2</scope>
</reference>
<reference key="16">
    <citation type="journal article" date="2017" name="Neuron">
        <title>GARLH family proteins stabilize GABAA receptors at synapses.</title>
        <authorList>
            <person name="Yamasaki T."/>
            <person name="Hoyos-Ramirez E."/>
            <person name="Martenson J.S."/>
            <person name="Morimoto-Tomita M."/>
            <person name="Tomita S."/>
        </authorList>
    </citation>
    <scope>IDENTIFICATION BY MASS SPECTROMETRY</scope>
    <scope>IDENTIFICATION IN A COMPLEX WITH LHFPL4; GABRA1; GABRB2; GABRG2 AND GABRB3</scope>
    <scope>INTERACTION WITH LHFPL4 AND GABRA1</scope>
</reference>
<reference key="17">
    <citation type="journal article" date="2018" name="Cell Rep.">
        <title>Impairment of inhibitory synapse formation and motor behavior in mice lacking the NL2 binding partner LHFPL4/GARLH4.</title>
        <authorList>
            <person name="Wu M."/>
            <person name="Tian H.L."/>
            <person name="Liu X."/>
            <person name="Lai J.H.C."/>
            <person name="Du S."/>
            <person name="Xia J."/>
        </authorList>
    </citation>
    <scope>SUBCELLULAR LOCATION</scope>
</reference>
<keyword id="KW-0002">3D-structure</keyword>
<keyword id="KW-0025">Alternative splicing</keyword>
<keyword id="KW-0130">Cell adhesion</keyword>
<keyword id="KW-1003">Cell membrane</keyword>
<keyword id="KW-0966">Cell projection</keyword>
<keyword id="KW-0903">Direct protein sequencing</keyword>
<keyword id="KW-1015">Disulfide bond</keyword>
<keyword id="KW-0325">Glycoprotein</keyword>
<keyword id="KW-0472">Membrane</keyword>
<keyword id="KW-0597">Phosphoprotein</keyword>
<keyword id="KW-0628">Postsynaptic cell membrane</keyword>
<keyword id="KW-1185">Reference proteome</keyword>
<keyword id="KW-0732">Signal</keyword>
<keyword id="KW-0770">Synapse</keyword>
<keyword id="KW-0812">Transmembrane</keyword>
<keyword id="KW-1133">Transmembrane helix</keyword>
<accession>Q62888</accession>
<dbReference type="EMBL" id="U41662">
    <property type="protein sequence ID" value="AAA97870.1"/>
    <property type="molecule type" value="mRNA"/>
</dbReference>
<dbReference type="RefSeq" id="NP_446444.1">
    <molecule id="Q62888-1"/>
    <property type="nucleotide sequence ID" value="NM_053992.2"/>
</dbReference>
<dbReference type="RefSeq" id="XP_063124387.1">
    <molecule id="Q62888-1"/>
    <property type="nucleotide sequence ID" value="XM_063268317.1"/>
</dbReference>
<dbReference type="RefSeq" id="XP_063124388.1">
    <molecule id="Q62888-2"/>
    <property type="nucleotide sequence ID" value="XM_063268318.1"/>
</dbReference>
<dbReference type="PDB" id="5V5V">
    <property type="method" value="X-ray"/>
    <property type="resolution" value="4.11 A"/>
    <property type="chains" value="A/B/C/D/E/F=42-612"/>
</dbReference>
<dbReference type="PDBsum" id="5V5V"/>
<dbReference type="SMR" id="Q62888"/>
<dbReference type="BioGRID" id="250669">
    <property type="interactions" value="13"/>
</dbReference>
<dbReference type="CORUM" id="Q62888"/>
<dbReference type="FunCoup" id="Q62888">
    <property type="interactions" value="1339"/>
</dbReference>
<dbReference type="IntAct" id="Q62888">
    <property type="interactions" value="5"/>
</dbReference>
<dbReference type="MINT" id="Q62888"/>
<dbReference type="STRING" id="10116.ENSRNOP00000075845"/>
<dbReference type="ESTHER" id="ratno-2neur">
    <property type="family name" value="Neuroligin"/>
</dbReference>
<dbReference type="MEROPS" id="S09.995"/>
<dbReference type="GlyCosmos" id="Q62888">
    <property type="glycosylation" value="3 sites, No reported glycans"/>
</dbReference>
<dbReference type="GlyGen" id="Q62888">
    <property type="glycosylation" value="5 sites"/>
</dbReference>
<dbReference type="iPTMnet" id="Q62888"/>
<dbReference type="PhosphoSitePlus" id="Q62888"/>
<dbReference type="PaxDb" id="10116-ENSRNOP00000053713"/>
<dbReference type="ABCD" id="Q62888">
    <property type="antibodies" value="1 sequenced antibody"/>
</dbReference>
<dbReference type="Ensembl" id="ENSRNOT00000056872.6">
    <molecule id="Q62888-1"/>
    <property type="protein sequence ID" value="ENSRNOP00000053713.5"/>
    <property type="gene ID" value="ENSRNOG00000015430.10"/>
</dbReference>
<dbReference type="Ensembl" id="ENSRNOT00000092662.2">
    <molecule id="Q62888-2"/>
    <property type="protein sequence ID" value="ENSRNOP00000075845.2"/>
    <property type="gene ID" value="ENSRNOG00000015430.10"/>
</dbReference>
<dbReference type="GeneID" id="117096"/>
<dbReference type="KEGG" id="rno:117096"/>
<dbReference type="UCSC" id="RGD:621118">
    <molecule id="Q62888-1"/>
    <property type="organism name" value="rat"/>
</dbReference>
<dbReference type="AGR" id="RGD:621118"/>
<dbReference type="CTD" id="57555"/>
<dbReference type="RGD" id="621118">
    <property type="gene designation" value="Nlgn2"/>
</dbReference>
<dbReference type="eggNOG" id="KOG1516">
    <property type="taxonomic scope" value="Eukaryota"/>
</dbReference>
<dbReference type="GeneTree" id="ENSGT00940000160598"/>
<dbReference type="InParanoid" id="Q62888"/>
<dbReference type="OMA" id="APKPCLM"/>
<dbReference type="OrthoDB" id="408631at2759"/>
<dbReference type="PhylomeDB" id="Q62888"/>
<dbReference type="Reactome" id="R-RNO-6794361">
    <property type="pathway name" value="Neurexins and neuroligins"/>
</dbReference>
<dbReference type="PRO" id="PR:Q62888"/>
<dbReference type="Proteomes" id="UP000002494">
    <property type="component" value="Chromosome 10"/>
</dbReference>
<dbReference type="GO" id="GO:0030424">
    <property type="term" value="C:axon"/>
    <property type="evidence" value="ECO:0000266"/>
    <property type="project" value="RGD"/>
</dbReference>
<dbReference type="GO" id="GO:0009986">
    <property type="term" value="C:cell surface"/>
    <property type="evidence" value="ECO:0000314"/>
    <property type="project" value="BHF-UCL"/>
</dbReference>
<dbReference type="GO" id="GO:0030425">
    <property type="term" value="C:dendrite"/>
    <property type="evidence" value="ECO:0000266"/>
    <property type="project" value="RGD"/>
</dbReference>
<dbReference type="GO" id="GO:0043198">
    <property type="term" value="C:dendritic shaft"/>
    <property type="evidence" value="ECO:0000314"/>
    <property type="project" value="RGD"/>
</dbReference>
<dbReference type="GO" id="GO:0098691">
    <property type="term" value="C:dopaminergic synapse"/>
    <property type="evidence" value="ECO:0000266"/>
    <property type="project" value="RGD"/>
</dbReference>
<dbReference type="GO" id="GO:0060076">
    <property type="term" value="C:excitatory synapse"/>
    <property type="evidence" value="ECO:0000314"/>
    <property type="project" value="RGD"/>
</dbReference>
<dbReference type="GO" id="GO:0098982">
    <property type="term" value="C:GABA-ergic synapse"/>
    <property type="evidence" value="ECO:0000314"/>
    <property type="project" value="SynGO"/>
</dbReference>
<dbReference type="GO" id="GO:0098690">
    <property type="term" value="C:glycinergic synapse"/>
    <property type="evidence" value="ECO:0000266"/>
    <property type="project" value="RGD"/>
</dbReference>
<dbReference type="GO" id="GO:0060077">
    <property type="term" value="C:inhibitory synapse"/>
    <property type="evidence" value="ECO:0000314"/>
    <property type="project" value="BHF-UCL"/>
</dbReference>
<dbReference type="GO" id="GO:0005886">
    <property type="term" value="C:plasma membrane"/>
    <property type="evidence" value="ECO:0000314"/>
    <property type="project" value="BHF-UCL"/>
</dbReference>
<dbReference type="GO" id="GO:0045211">
    <property type="term" value="C:postsynaptic membrane"/>
    <property type="evidence" value="ECO:0000314"/>
    <property type="project" value="BHF-UCL"/>
</dbReference>
<dbReference type="GO" id="GO:0099634">
    <property type="term" value="C:postsynaptic specialization membrane"/>
    <property type="evidence" value="ECO:0000314"/>
    <property type="project" value="SynGO"/>
</dbReference>
<dbReference type="GO" id="GO:0042734">
    <property type="term" value="C:presynaptic membrane"/>
    <property type="evidence" value="ECO:0007669"/>
    <property type="project" value="UniProtKB-SubCell"/>
</dbReference>
<dbReference type="GO" id="GO:0097470">
    <property type="term" value="C:ribbon synapse"/>
    <property type="evidence" value="ECO:0000314"/>
    <property type="project" value="RGD"/>
</dbReference>
<dbReference type="GO" id="GO:0045202">
    <property type="term" value="C:synapse"/>
    <property type="evidence" value="ECO:0000250"/>
    <property type="project" value="BHF-UCL"/>
</dbReference>
<dbReference type="GO" id="GO:0050839">
    <property type="term" value="F:cell adhesion molecule binding"/>
    <property type="evidence" value="ECO:0000250"/>
    <property type="project" value="BHF-UCL"/>
</dbReference>
<dbReference type="GO" id="GO:0042802">
    <property type="term" value="F:identical protein binding"/>
    <property type="evidence" value="ECO:0000266"/>
    <property type="project" value="RGD"/>
</dbReference>
<dbReference type="GO" id="GO:0042043">
    <property type="term" value="F:neurexin family protein binding"/>
    <property type="evidence" value="ECO:0000250"/>
    <property type="project" value="BHF-UCL"/>
</dbReference>
<dbReference type="GO" id="GO:0097116">
    <property type="term" value="P:gephyrin clustering involved in postsynaptic density assembly"/>
    <property type="evidence" value="ECO:0000250"/>
    <property type="project" value="BHF-UCL"/>
</dbReference>
<dbReference type="GO" id="GO:1904862">
    <property type="term" value="P:inhibitory synapse assembly"/>
    <property type="evidence" value="ECO:0000266"/>
    <property type="project" value="RGD"/>
</dbReference>
<dbReference type="GO" id="GO:1901142">
    <property type="term" value="P:insulin metabolic process"/>
    <property type="evidence" value="ECO:0000314"/>
    <property type="project" value="RGD"/>
</dbReference>
<dbReference type="GO" id="GO:0007630">
    <property type="term" value="P:jump response"/>
    <property type="evidence" value="ECO:0000315"/>
    <property type="project" value="BHF-UCL"/>
</dbReference>
<dbReference type="GO" id="GO:0035641">
    <property type="term" value="P:locomotory exploration behavior"/>
    <property type="evidence" value="ECO:0000250"/>
    <property type="project" value="BHF-UCL"/>
</dbReference>
<dbReference type="GO" id="GO:0050804">
    <property type="term" value="P:modulation of chemical synaptic transmission"/>
    <property type="evidence" value="ECO:0000250"/>
    <property type="project" value="BHF-UCL"/>
</dbReference>
<dbReference type="GO" id="GO:0050885">
    <property type="term" value="P:neuromuscular process controlling balance"/>
    <property type="evidence" value="ECO:0000250"/>
    <property type="project" value="BHF-UCL"/>
</dbReference>
<dbReference type="GO" id="GO:0007158">
    <property type="term" value="P:neuron cell-cell adhesion"/>
    <property type="evidence" value="ECO:0000314"/>
    <property type="project" value="BHF-UCL"/>
</dbReference>
<dbReference type="GO" id="GO:0072578">
    <property type="term" value="P:neurotransmitter-gated ion channel clustering"/>
    <property type="evidence" value="ECO:0000266"/>
    <property type="project" value="RGD"/>
</dbReference>
<dbReference type="GO" id="GO:0008284">
    <property type="term" value="P:positive regulation of cell population proliferation"/>
    <property type="evidence" value="ECO:0000314"/>
    <property type="project" value="RGD"/>
</dbReference>
<dbReference type="GO" id="GO:0060999">
    <property type="term" value="P:positive regulation of dendritic spine development"/>
    <property type="evidence" value="ECO:0000315"/>
    <property type="project" value="RGD"/>
</dbReference>
<dbReference type="GO" id="GO:2000463">
    <property type="term" value="P:positive regulation of excitatory postsynaptic potential"/>
    <property type="evidence" value="ECO:0000250"/>
    <property type="project" value="BHF-UCL"/>
</dbReference>
<dbReference type="GO" id="GO:0097151">
    <property type="term" value="P:positive regulation of inhibitory postsynaptic potential"/>
    <property type="evidence" value="ECO:0000315"/>
    <property type="project" value="BHF-UCL"/>
</dbReference>
<dbReference type="GO" id="GO:0032024">
    <property type="term" value="P:positive regulation of insulin secretion"/>
    <property type="evidence" value="ECO:0000314"/>
    <property type="project" value="RGD"/>
</dbReference>
<dbReference type="GO" id="GO:1902474">
    <property type="term" value="P:positive regulation of protein localization to synapse"/>
    <property type="evidence" value="ECO:0000315"/>
    <property type="project" value="RGD"/>
</dbReference>
<dbReference type="GO" id="GO:0051965">
    <property type="term" value="P:positive regulation of synapse assembly"/>
    <property type="evidence" value="ECO:0000314"/>
    <property type="project" value="BHF-UCL"/>
</dbReference>
<dbReference type="GO" id="GO:0032230">
    <property type="term" value="P:positive regulation of synaptic transmission, GABAergic"/>
    <property type="evidence" value="ECO:0000250"/>
    <property type="project" value="BHF-UCL"/>
</dbReference>
<dbReference type="GO" id="GO:0051968">
    <property type="term" value="P:positive regulation of synaptic transmission, glutamatergic"/>
    <property type="evidence" value="ECO:0000250"/>
    <property type="project" value="BHF-UCL"/>
</dbReference>
<dbReference type="GO" id="GO:2000809">
    <property type="term" value="P:positive regulation of synaptic vesicle clustering"/>
    <property type="evidence" value="ECO:0000266"/>
    <property type="project" value="RGD"/>
</dbReference>
<dbReference type="GO" id="GO:1904034">
    <property type="term" value="P:positive regulation of t-SNARE clustering"/>
    <property type="evidence" value="ECO:0000314"/>
    <property type="project" value="RGD"/>
</dbReference>
<dbReference type="GO" id="GO:0097119">
    <property type="term" value="P:postsynaptic density protein 95 clustering"/>
    <property type="evidence" value="ECO:0000250"/>
    <property type="project" value="BHF-UCL"/>
</dbReference>
<dbReference type="GO" id="GO:0097104">
    <property type="term" value="P:postsynaptic membrane assembly"/>
    <property type="evidence" value="ECO:0000250"/>
    <property type="project" value="BHF-UCL"/>
</dbReference>
<dbReference type="GO" id="GO:0098698">
    <property type="term" value="P:postsynaptic specialization assembly"/>
    <property type="evidence" value="ECO:0000266"/>
    <property type="project" value="RGD"/>
</dbReference>
<dbReference type="GO" id="GO:0099054">
    <property type="term" value="P:presynapse assembly"/>
    <property type="evidence" value="ECO:0000266"/>
    <property type="project" value="RGD"/>
</dbReference>
<dbReference type="GO" id="GO:0097105">
    <property type="term" value="P:presynaptic membrane assembly"/>
    <property type="evidence" value="ECO:0000314"/>
    <property type="project" value="BHF-UCL"/>
</dbReference>
<dbReference type="GO" id="GO:0034394">
    <property type="term" value="P:protein localization to cell surface"/>
    <property type="evidence" value="ECO:0000266"/>
    <property type="project" value="RGD"/>
</dbReference>
<dbReference type="GO" id="GO:0035418">
    <property type="term" value="P:protein localization to synapse"/>
    <property type="evidence" value="ECO:0000250"/>
    <property type="project" value="BHF-UCL"/>
</dbReference>
<dbReference type="GO" id="GO:1905606">
    <property type="term" value="P:regulation of presynapse assembly"/>
    <property type="evidence" value="ECO:0000314"/>
    <property type="project" value="SynGO"/>
</dbReference>
<dbReference type="GO" id="GO:0002087">
    <property type="term" value="P:regulation of respiratory gaseous exchange by nervous system process"/>
    <property type="evidence" value="ECO:0000250"/>
    <property type="project" value="BHF-UCL"/>
</dbReference>
<dbReference type="GO" id="GO:0019233">
    <property type="term" value="P:sensory perception of pain"/>
    <property type="evidence" value="ECO:0000250"/>
    <property type="project" value="BHF-UCL"/>
</dbReference>
<dbReference type="GO" id="GO:0035176">
    <property type="term" value="P:social behavior"/>
    <property type="evidence" value="ECO:0000315"/>
    <property type="project" value="BHF-UCL"/>
</dbReference>
<dbReference type="GO" id="GO:0007416">
    <property type="term" value="P:synapse assembly"/>
    <property type="evidence" value="ECO:0000314"/>
    <property type="project" value="BHF-UCL"/>
</dbReference>
<dbReference type="GO" id="GO:0050808">
    <property type="term" value="P:synapse organization"/>
    <property type="evidence" value="ECO:0000314"/>
    <property type="project" value="MGI"/>
</dbReference>
<dbReference type="GO" id="GO:0051932">
    <property type="term" value="P:synaptic transmission, GABAergic"/>
    <property type="evidence" value="ECO:0000266"/>
    <property type="project" value="RGD"/>
</dbReference>
<dbReference type="GO" id="GO:0072553">
    <property type="term" value="P:terminal button organization"/>
    <property type="evidence" value="ECO:0000315"/>
    <property type="project" value="BHF-UCL"/>
</dbReference>
<dbReference type="GO" id="GO:0001966">
    <property type="term" value="P:thigmotaxis"/>
    <property type="evidence" value="ECO:0000315"/>
    <property type="project" value="BHF-UCL"/>
</dbReference>
<dbReference type="FunFam" id="3.40.50.1820:FF:000001">
    <property type="entry name" value="Neuroligin 3 isoform"/>
    <property type="match status" value="1"/>
</dbReference>
<dbReference type="Gene3D" id="3.40.50.1820">
    <property type="entry name" value="alpha/beta hydrolase"/>
    <property type="match status" value="1"/>
</dbReference>
<dbReference type="InterPro" id="IPR029058">
    <property type="entry name" value="AB_hydrolase_fold"/>
</dbReference>
<dbReference type="InterPro" id="IPR002018">
    <property type="entry name" value="CarbesteraseB"/>
</dbReference>
<dbReference type="InterPro" id="IPR019819">
    <property type="entry name" value="Carboxylesterase_B_CS"/>
</dbReference>
<dbReference type="InterPro" id="IPR051093">
    <property type="entry name" value="Neuroligin/BSAL"/>
</dbReference>
<dbReference type="InterPro" id="IPR000460">
    <property type="entry name" value="Nlgn"/>
</dbReference>
<dbReference type="PANTHER" id="PTHR43903">
    <property type="entry name" value="NEUROLIGIN"/>
    <property type="match status" value="1"/>
</dbReference>
<dbReference type="Pfam" id="PF00135">
    <property type="entry name" value="COesterase"/>
    <property type="match status" value="1"/>
</dbReference>
<dbReference type="PRINTS" id="PR01090">
    <property type="entry name" value="NEUROLIGIN"/>
</dbReference>
<dbReference type="SUPFAM" id="SSF53474">
    <property type="entry name" value="alpha/beta-Hydrolases"/>
    <property type="match status" value="1"/>
</dbReference>
<dbReference type="PROSITE" id="PS00941">
    <property type="entry name" value="CARBOXYLESTERASE_B_2"/>
    <property type="match status" value="1"/>
</dbReference>
<gene>
    <name type="primary">Nlgn2</name>
</gene>
<feature type="signal peptide" evidence="23">
    <location>
        <begin position="1"/>
        <end position="14"/>
    </location>
</feature>
<feature type="chain" id="PRO_0000008644" description="Neuroligin-2">
    <location>
        <begin position="15"/>
        <end position="836"/>
    </location>
</feature>
<feature type="topological domain" description="Extracellular" evidence="4">
    <location>
        <begin position="15"/>
        <end position="678"/>
    </location>
</feature>
<feature type="transmembrane region" description="Helical" evidence="4">
    <location>
        <begin position="679"/>
        <end position="699"/>
    </location>
</feature>
<feature type="topological domain" description="Cytoplasmic" evidence="4">
    <location>
        <begin position="700"/>
        <end position="836"/>
    </location>
</feature>
<feature type="region of interest" description="Disordered" evidence="5">
    <location>
        <begin position="623"/>
        <end position="661"/>
    </location>
</feature>
<feature type="region of interest" description="Required for interaction with LHFPL4" evidence="2">
    <location>
        <begin position="679"/>
        <end position="699"/>
    </location>
</feature>
<feature type="region of interest" description="Disordered" evidence="5">
    <location>
        <begin position="711"/>
        <end position="735"/>
    </location>
</feature>
<feature type="region of interest" description="Disordered" evidence="5">
    <location>
        <begin position="791"/>
        <end position="836"/>
    </location>
</feature>
<feature type="compositionally biased region" description="Gly residues" evidence="5">
    <location>
        <begin position="717"/>
        <end position="728"/>
    </location>
</feature>
<feature type="compositionally biased region" description="Pro residues" evidence="5">
    <location>
        <begin position="796"/>
        <end position="819"/>
    </location>
</feature>
<feature type="compositionally biased region" description="Polar residues" evidence="5">
    <location>
        <begin position="824"/>
        <end position="836"/>
    </location>
</feature>
<feature type="modified residue" description="Phosphoserine" evidence="24">
    <location>
        <position position="714"/>
    </location>
</feature>
<feature type="modified residue" description="Phosphoserine" evidence="2">
    <location>
        <position position="719"/>
    </location>
</feature>
<feature type="glycosylation site" description="N-linked (GlcNAc...) asparagine" evidence="4">
    <location>
        <position position="98"/>
    </location>
</feature>
<feature type="glycosylation site" description="N-linked (GlcNAc...) asparagine" evidence="4">
    <location>
        <position position="136"/>
    </location>
</feature>
<feature type="glycosylation site" description="N-linked (GlcNAc...) asparagine" evidence="4">
    <location>
        <position position="522"/>
    </location>
</feature>
<feature type="disulfide bond" evidence="1">
    <location>
        <begin position="106"/>
        <end position="141"/>
    </location>
</feature>
<feature type="disulfide bond" evidence="1">
    <location>
        <begin position="317"/>
        <end position="328"/>
    </location>
</feature>
<feature type="disulfide bond" evidence="1">
    <location>
        <begin position="487"/>
        <end position="521"/>
    </location>
</feature>
<feature type="splice variant" id="VSP_007533" description="In isoform 2." evidence="21">
    <location>
        <begin position="153"/>
        <end position="169"/>
    </location>
</feature>
<feature type="mutagenesis site" description="Abolishes interaction with GPHN." evidence="10">
    <original>Y</original>
    <variation>A</variation>
    <location>
        <position position="770"/>
    </location>
</feature>
<comment type="function">
    <text evidence="2 10 14">Transmembrane scaffolding protein involved in cell-cell interactions via its interactions with neurexin family members. Mediates cell-cell interactions both in neurons and in other types of cells, such as Langerhans beta cells. Plays a role in synapse function and synaptic signal transmission, especially via gamma-aminobutyric acid receptors (GABA(A) receptors). Functions by recruiting and clustering synaptic proteins. Promotes clustering of postsynaptic GABRG2 and GPHN. Promotes clustering of postsynaptic LHFPL4 (By similarity). Modulates signaling by inhibitory synapses, and thereby plays a role in controlling the ratio of signaling by excitatory and inhibitory synapses and information processing. Required for normal signal amplitude from inhibitory synapses, but is not essential for normal signal frequency. May promote the initial formation of synapses, but is not essential for this. In vitro, triggers the de novo formation of presynaptic structures. Mediates cell-cell interactions between Langerhans beta cells and modulates insulin secretion.</text>
</comment>
<comment type="subunit">
    <text evidence="2 3 8 10 13 15 16 17 18 19 20">Interacts with neurexins NRXN1, NRXN2 and NRXN3 (PubMed:18334216, PubMed:20624592, PubMed:8576240). Interaction with neurexins is mediated by heparan sulfate glycan modification on neurexin (By similarity). Interacts (via its C-terminus) with DLG4/PSD-95 (via PDZ domain 3) (By similarity). Interacts with PATJ (PubMed:9647694). Interacts with GPHN (PubMed:19755106). Interacts with MDGA1 and MDGA2 (PubMed:23248271). Found in a complex with MAGI2 and IGSF9B, where it interacts with MAGI2 (via WW 1, WW 2 and PDZ 2 domains) (PubMed:23751499). Identified in a complex of 720 kDa composed of LHFPL4, NLGN2, GABRA1, GABRB2, GABRG2 and GABRB3 (PubMed:28279354). Interacts with LHFPL4; leading to mutual regulation of the protein level and synaptic clustering (PubMed:28279354, PubMed:29742426). Interacts with GABRA1 (PubMed:28279354).</text>
</comment>
<comment type="subcellular location">
    <subcellularLocation>
        <location>Cell membrane</location>
        <topology>Single-pass type I membrane protein</topology>
    </subcellularLocation>
    <subcellularLocation>
        <location evidence="18">Postsynaptic cell membrane</location>
    </subcellularLocation>
    <subcellularLocation>
        <location>Presynaptic cell membrane</location>
    </subcellularLocation>
    <text>Detected at presynaptic membranes in retina, and at postsynaptic membranes in brain. Detected at dendritic spines in cultured neurons. Colocalizes with GPHN and ARHGEF9 at neuronal cell membranes.</text>
</comment>
<comment type="alternative products">
    <event type="alternative splicing"/>
    <isoform>
        <id>Q62888-1</id>
        <name>1</name>
        <sequence type="displayed"/>
    </isoform>
    <isoform>
        <id>Q62888-2</id>
        <name>2</name>
        <sequence type="described" ref="VSP_007533"/>
    </isoform>
</comment>
<comment type="tissue specificity">
    <text evidence="6 7 9 10 11 12 19">Detected on hippocampus neurons, especially at inhibitory synapses. Detected in retina, in the outer and inner plexiform layer. Detected in pancreas, in islet of Langerhans beta cells (at protein level). Expressed in brain, spinal cord and dorsal root ganglion. Detected in brain, and at lower levels in pancreas islet beta cells.</text>
</comment>
<comment type="similarity">
    <text evidence="22">Belongs to the type-B carboxylesterase/lipase family.</text>
</comment>
<name>NLGN2_RAT</name>
<evidence type="ECO:0000250" key="1"/>
<evidence type="ECO:0000250" key="2">
    <source>
        <dbReference type="UniProtKB" id="Q69ZK9"/>
    </source>
</evidence>
<evidence type="ECO:0000250" key="3">
    <source>
        <dbReference type="UniProtKB" id="Q8NFZ4"/>
    </source>
</evidence>
<evidence type="ECO:0000255" key="4"/>
<evidence type="ECO:0000256" key="5">
    <source>
        <dbReference type="SAM" id="MobiDB-lite"/>
    </source>
</evidence>
<evidence type="ECO:0000269" key="6">
    <source>
    </source>
</evidence>
<evidence type="ECO:0000269" key="7">
    <source>
    </source>
</evidence>
<evidence type="ECO:0000269" key="8">
    <source>
    </source>
</evidence>
<evidence type="ECO:0000269" key="9">
    <source>
    </source>
</evidence>
<evidence type="ECO:0000269" key="10">
    <source>
    </source>
</evidence>
<evidence type="ECO:0000269" key="11">
    <source>
    </source>
</evidence>
<evidence type="ECO:0000269" key="12">
    <source>
    </source>
</evidence>
<evidence type="ECO:0000269" key="13">
    <source>
    </source>
</evidence>
<evidence type="ECO:0000269" key="14">
    <source>
    </source>
</evidence>
<evidence type="ECO:0000269" key="15">
    <source>
    </source>
</evidence>
<evidence type="ECO:0000269" key="16">
    <source>
    </source>
</evidence>
<evidence type="ECO:0000269" key="17">
    <source>
    </source>
</evidence>
<evidence type="ECO:0000269" key="18">
    <source>
    </source>
</evidence>
<evidence type="ECO:0000269" key="19">
    <source>
    </source>
</evidence>
<evidence type="ECO:0000269" key="20">
    <source>
    </source>
</evidence>
<evidence type="ECO:0000303" key="21">
    <source>
    </source>
</evidence>
<evidence type="ECO:0000305" key="22"/>
<evidence type="ECO:0000305" key="23">
    <source>
    </source>
</evidence>
<evidence type="ECO:0007744" key="24">
    <source>
    </source>
</evidence>
<proteinExistence type="evidence at protein level"/>
<protein>
    <recommendedName>
        <fullName>Neuroligin-2</fullName>
    </recommendedName>
</protein>
<sequence length="836" mass="90961">MWLLALCLVGLAGAQRGGGGPGGGAPGGPGLGLGSLGEERFPVVNTAYGRVRGVRRELNNEILGPVVQFLGVPYATPPLGARRFQPPEAPASWPGVRNATTLPPACPQNLHGALPAIMLPVWFTDNLEAAATYVQNQSEDCLYLNLYVPTEDGPLTKKRDEATLNPPDTDIRDSGKKPVMLFLHGGSYMEGTGNMFDGSVLAAYGNVIVATLNYRLGVLGFLSTGDQAAKGNYGLLDQIQALRWLSENIAHFGGDPERITIFGSGAGASCVNLLILSHHSEGLFQKAIAQSGTAISSWSVNYQPLKYTRLLAAKVGCDREDSTEAVECLRRKSSRELVDQDVQPARYHIAFGPVVDGDVVPDDPEILMQQGEFLNYDMLIGVNQGEGLKFVEDSAESEDGVSASAFDFTVSNFVDNLYGYPEGKDVLRETIKFMYTDWADRDNGEMRRKTLLALFTDHQWVAPAVATAKLHADYQSPVYFYTFYHHCQAEGRPEWADAAHGDELPYVFGVPMVGATDLFPCNFSKNDVMLSAVVMTYWTNFAKTGDPNQPVPQDTKFIHTKPNRFEEVVWSKFNSKEKQYLHIGLKPRVRDNYRANKVAFWLELVPHLHNLHTELFTTTTRLPPYATRWPPRTPGPGTSGTRRPPPPATLPPESDIDLGPRAYDRFPGDSRDYSTELSVTVAVGASLLFLNILAFAALYYKRDRRQELRCRRLSPPGGSGSGVPGGGPLLPTAGRELPPEEELVSLQLKRGGGVGADPAEALRPACPPDYTLALRRAPDDVPLLAPGALTLLPSGLGPPPPPPPPSLHPFGPFPPPPPTATSHNNTLPHPHSTTRV</sequence>